<reference key="1">
    <citation type="journal article" date="2003" name="Proc. Natl. Acad. Sci. U.S.A.">
        <title>The genome sequence of Blochmannia floridanus: comparative analysis of reduced genomes.</title>
        <authorList>
            <person name="Gil R."/>
            <person name="Silva F.J."/>
            <person name="Zientz E."/>
            <person name="Delmotte F."/>
            <person name="Gonzalez-Candelas F."/>
            <person name="Latorre A."/>
            <person name="Rausell C."/>
            <person name="Kamerbeek J."/>
            <person name="Gadau J."/>
            <person name="Hoelldobler B."/>
            <person name="van Ham R.C.H.J."/>
            <person name="Gross R."/>
            <person name="Moya A."/>
        </authorList>
    </citation>
    <scope>NUCLEOTIDE SEQUENCE [LARGE SCALE GENOMIC DNA]</scope>
</reference>
<comment type="function">
    <text evidence="1">One of the primary rRNA binding proteins, this protein initially binds near the 5'-end of the 23S rRNA. It is important during the early stages of 50S assembly. It makes multiple contacts with different domains of the 23S rRNA in the assembled 50S subunit and ribosome.</text>
</comment>
<comment type="function">
    <text evidence="1">Forms part of the polypeptide exit tunnel.</text>
</comment>
<comment type="subunit">
    <text evidence="1">Part of the 50S ribosomal subunit.</text>
</comment>
<comment type="similarity">
    <text evidence="1">Belongs to the universal ribosomal protein uL4 family.</text>
</comment>
<evidence type="ECO:0000255" key="1">
    <source>
        <dbReference type="HAMAP-Rule" id="MF_01328"/>
    </source>
</evidence>
<evidence type="ECO:0000256" key="2">
    <source>
        <dbReference type="SAM" id="MobiDB-lite"/>
    </source>
</evidence>
<evidence type="ECO:0000305" key="3"/>
<name>RL4_BLOFL</name>
<feature type="chain" id="PRO_0000129199" description="Large ribosomal subunit protein uL4">
    <location>
        <begin position="1"/>
        <end position="212"/>
    </location>
</feature>
<feature type="region of interest" description="Disordered" evidence="2">
    <location>
        <begin position="54"/>
        <end position="85"/>
    </location>
</feature>
<feature type="compositionally biased region" description="Polar residues" evidence="2">
    <location>
        <begin position="54"/>
        <end position="65"/>
    </location>
</feature>
<keyword id="KW-1185">Reference proteome</keyword>
<keyword id="KW-0687">Ribonucleoprotein</keyword>
<keyword id="KW-0689">Ribosomal protein</keyword>
<keyword id="KW-0694">RNA-binding</keyword>
<keyword id="KW-0699">rRNA-binding</keyword>
<organism>
    <name type="scientific">Blochmanniella floridana</name>
    <dbReference type="NCBI Taxonomy" id="203907"/>
    <lineage>
        <taxon>Bacteria</taxon>
        <taxon>Pseudomonadati</taxon>
        <taxon>Pseudomonadota</taxon>
        <taxon>Gammaproteobacteria</taxon>
        <taxon>Enterobacterales</taxon>
        <taxon>Enterobacteriaceae</taxon>
        <taxon>ant endosymbionts</taxon>
        <taxon>Candidatus Blochmanniella</taxon>
    </lineage>
</organism>
<accession>Q7VQE7</accession>
<proteinExistence type="inferred from homology"/>
<sequence>MKLQLQCFLINDLEKYNCINVSVSDKVFGYPFNPALIHQIVSSYLINCRQGSKSQKSRSDVSGSNKKPWRQKGTGRARSGSVKSPIWRSGGVTFASKPKKYDQKINKKMYKGAMKSILSKLVCDNRLFLIEDLFLEKPKTNLLLKKLKNITSDRSVLIVTDNVIDKNLILASSNLHTVKIYNLNSIDPVSLINFNITLLFRTIVESLELRLS</sequence>
<protein>
    <recommendedName>
        <fullName evidence="1">Large ribosomal subunit protein uL4</fullName>
    </recommendedName>
    <alternativeName>
        <fullName evidence="3">50S ribosomal protein L4</fullName>
    </alternativeName>
</protein>
<dbReference type="EMBL" id="BX248583">
    <property type="protein sequence ID" value="CAD83707.1"/>
    <property type="molecule type" value="Genomic_DNA"/>
</dbReference>
<dbReference type="SMR" id="Q7VQE7"/>
<dbReference type="STRING" id="203907.Bfl192"/>
<dbReference type="KEGG" id="bfl:Bfl192"/>
<dbReference type="eggNOG" id="COG0088">
    <property type="taxonomic scope" value="Bacteria"/>
</dbReference>
<dbReference type="HOGENOM" id="CLU_041575_5_2_6"/>
<dbReference type="OrthoDB" id="9803201at2"/>
<dbReference type="Proteomes" id="UP000002192">
    <property type="component" value="Chromosome"/>
</dbReference>
<dbReference type="GO" id="GO:1990904">
    <property type="term" value="C:ribonucleoprotein complex"/>
    <property type="evidence" value="ECO:0007669"/>
    <property type="project" value="UniProtKB-KW"/>
</dbReference>
<dbReference type="GO" id="GO:0005840">
    <property type="term" value="C:ribosome"/>
    <property type="evidence" value="ECO:0007669"/>
    <property type="project" value="UniProtKB-KW"/>
</dbReference>
<dbReference type="GO" id="GO:0019843">
    <property type="term" value="F:rRNA binding"/>
    <property type="evidence" value="ECO:0007669"/>
    <property type="project" value="UniProtKB-UniRule"/>
</dbReference>
<dbReference type="GO" id="GO:0003735">
    <property type="term" value="F:structural constituent of ribosome"/>
    <property type="evidence" value="ECO:0007669"/>
    <property type="project" value="InterPro"/>
</dbReference>
<dbReference type="GO" id="GO:0006412">
    <property type="term" value="P:translation"/>
    <property type="evidence" value="ECO:0007669"/>
    <property type="project" value="UniProtKB-UniRule"/>
</dbReference>
<dbReference type="Gene3D" id="3.40.1370.10">
    <property type="match status" value="1"/>
</dbReference>
<dbReference type="HAMAP" id="MF_01328_B">
    <property type="entry name" value="Ribosomal_uL4_B"/>
    <property type="match status" value="1"/>
</dbReference>
<dbReference type="InterPro" id="IPR002136">
    <property type="entry name" value="Ribosomal_uL4"/>
</dbReference>
<dbReference type="InterPro" id="IPR013005">
    <property type="entry name" value="Ribosomal_uL4-like"/>
</dbReference>
<dbReference type="InterPro" id="IPR023574">
    <property type="entry name" value="Ribosomal_uL4_dom_sf"/>
</dbReference>
<dbReference type="NCBIfam" id="TIGR03953">
    <property type="entry name" value="rplD_bact"/>
    <property type="match status" value="1"/>
</dbReference>
<dbReference type="PANTHER" id="PTHR10746">
    <property type="entry name" value="50S RIBOSOMAL PROTEIN L4"/>
    <property type="match status" value="1"/>
</dbReference>
<dbReference type="PANTHER" id="PTHR10746:SF6">
    <property type="entry name" value="LARGE RIBOSOMAL SUBUNIT PROTEIN UL4M"/>
    <property type="match status" value="1"/>
</dbReference>
<dbReference type="Pfam" id="PF00573">
    <property type="entry name" value="Ribosomal_L4"/>
    <property type="match status" value="1"/>
</dbReference>
<dbReference type="SUPFAM" id="SSF52166">
    <property type="entry name" value="Ribosomal protein L4"/>
    <property type="match status" value="1"/>
</dbReference>
<gene>
    <name evidence="1" type="primary">rplD</name>
    <name type="ordered locus">Bfl192</name>
</gene>